<feature type="chain" id="PRO_0000275489" description="Cytochrome b6-f complex subunit 5">
    <location>
        <begin position="1"/>
        <end position="37"/>
    </location>
</feature>
<feature type="transmembrane region" description="Helical" evidence="1">
    <location>
        <begin position="5"/>
        <end position="25"/>
    </location>
</feature>
<comment type="function">
    <text evidence="1">Component of the cytochrome b6-f complex, which mediates electron transfer between photosystem II (PSII) and photosystem I (PSI), cyclic electron flow around PSI, and state transitions. PetG is required for either the stability or assembly of the cytochrome b6-f complex.</text>
</comment>
<comment type="subunit">
    <text evidence="1">The 4 large subunits of the cytochrome b6-f complex are cytochrome b6, subunit IV (17 kDa polypeptide, PetD), cytochrome f and the Rieske protein, while the 4 small subunits are PetG, PetL, PetM and PetN. The complex functions as a dimer.</text>
</comment>
<comment type="subcellular location">
    <subcellularLocation>
        <location evidence="1">Plastid</location>
        <location evidence="1">Chloroplast thylakoid membrane</location>
        <topology evidence="1">Single-pass membrane protein</topology>
    </subcellularLocation>
</comment>
<comment type="similarity">
    <text evidence="1">Belongs to the PetG family.</text>
</comment>
<name>PETG_SOYBN</name>
<evidence type="ECO:0000255" key="1">
    <source>
        <dbReference type="HAMAP-Rule" id="MF_00432"/>
    </source>
</evidence>
<proteinExistence type="inferred from homology"/>
<dbReference type="EMBL" id="DQ317523">
    <property type="protein sequence ID" value="ABC25143.1"/>
    <property type="molecule type" value="Genomic_DNA"/>
</dbReference>
<dbReference type="RefSeq" id="YP_538783.1">
    <property type="nucleotide sequence ID" value="NC_007942.1"/>
</dbReference>
<dbReference type="SMR" id="Q2PMR5"/>
<dbReference type="FunCoup" id="Q2PMR5">
    <property type="interactions" value="46"/>
</dbReference>
<dbReference type="STRING" id="3847.Q2PMR5"/>
<dbReference type="PaxDb" id="3847-GLYMA12G36123.1"/>
<dbReference type="EnsemblPlants" id="KRH27386">
    <property type="protein sequence ID" value="KRH27386"/>
    <property type="gene ID" value="GLYMA_12G232500"/>
</dbReference>
<dbReference type="GeneID" id="3989315"/>
<dbReference type="Gramene" id="KRH27386">
    <property type="protein sequence ID" value="KRH27386"/>
    <property type="gene ID" value="GLYMA_12G232500"/>
</dbReference>
<dbReference type="KEGG" id="gmx:3989315"/>
<dbReference type="eggNOG" id="ENOG502SD3G">
    <property type="taxonomic scope" value="Eukaryota"/>
</dbReference>
<dbReference type="HOGENOM" id="CLU_216962_0_0_1"/>
<dbReference type="InParanoid" id="Q2PMR5"/>
<dbReference type="OrthoDB" id="35473at2759"/>
<dbReference type="Proteomes" id="UP000008827">
    <property type="component" value="Chloroplast"/>
</dbReference>
<dbReference type="GO" id="GO:0009535">
    <property type="term" value="C:chloroplast thylakoid membrane"/>
    <property type="evidence" value="ECO:0007669"/>
    <property type="project" value="UniProtKB-SubCell"/>
</dbReference>
<dbReference type="GO" id="GO:0009512">
    <property type="term" value="C:cytochrome b6f complex"/>
    <property type="evidence" value="ECO:0007669"/>
    <property type="project" value="InterPro"/>
</dbReference>
<dbReference type="GO" id="GO:0045158">
    <property type="term" value="F:electron transporter, transferring electrons within cytochrome b6/f complex of photosystem II activity"/>
    <property type="evidence" value="ECO:0007669"/>
    <property type="project" value="UniProtKB-UniRule"/>
</dbReference>
<dbReference type="GO" id="GO:0017004">
    <property type="term" value="P:cytochrome complex assembly"/>
    <property type="evidence" value="ECO:0007669"/>
    <property type="project" value="UniProtKB-UniRule"/>
</dbReference>
<dbReference type="GO" id="GO:0015979">
    <property type="term" value="P:photosynthesis"/>
    <property type="evidence" value="ECO:0007669"/>
    <property type="project" value="UniProtKB-KW"/>
</dbReference>
<dbReference type="HAMAP" id="MF_00432">
    <property type="entry name" value="Cytb6_f_PetG"/>
    <property type="match status" value="1"/>
</dbReference>
<dbReference type="InterPro" id="IPR003683">
    <property type="entry name" value="Cyt_6/f_cplx_su5"/>
</dbReference>
<dbReference type="InterPro" id="IPR036099">
    <property type="entry name" value="Cyt_6/f_cplx_su5_sf"/>
</dbReference>
<dbReference type="NCBIfam" id="NF001907">
    <property type="entry name" value="PRK00665.1"/>
    <property type="match status" value="1"/>
</dbReference>
<dbReference type="Pfam" id="PF02529">
    <property type="entry name" value="PetG"/>
    <property type="match status" value="1"/>
</dbReference>
<dbReference type="PIRSF" id="PIRSF000034">
    <property type="entry name" value="Cyt_b6-f_V"/>
    <property type="match status" value="1"/>
</dbReference>
<dbReference type="SUPFAM" id="SSF103446">
    <property type="entry name" value="PetG subunit of the cytochrome b6f complex"/>
    <property type="match status" value="1"/>
</dbReference>
<organism>
    <name type="scientific">Glycine max</name>
    <name type="common">Soybean</name>
    <name type="synonym">Glycine hispida</name>
    <dbReference type="NCBI Taxonomy" id="3847"/>
    <lineage>
        <taxon>Eukaryota</taxon>
        <taxon>Viridiplantae</taxon>
        <taxon>Streptophyta</taxon>
        <taxon>Embryophyta</taxon>
        <taxon>Tracheophyta</taxon>
        <taxon>Spermatophyta</taxon>
        <taxon>Magnoliopsida</taxon>
        <taxon>eudicotyledons</taxon>
        <taxon>Gunneridae</taxon>
        <taxon>Pentapetalae</taxon>
        <taxon>rosids</taxon>
        <taxon>fabids</taxon>
        <taxon>Fabales</taxon>
        <taxon>Fabaceae</taxon>
        <taxon>Papilionoideae</taxon>
        <taxon>50 kb inversion clade</taxon>
        <taxon>NPAAA clade</taxon>
        <taxon>indigoferoid/millettioid clade</taxon>
        <taxon>Phaseoleae</taxon>
        <taxon>Glycine</taxon>
        <taxon>Glycine subgen. Soja</taxon>
    </lineage>
</organism>
<geneLocation type="chloroplast"/>
<accession>Q2PMR5</accession>
<sequence length="37" mass="4170">MIEVFLFGIVLGLIPITLAGLFVTAYLQYRRGDQLDL</sequence>
<protein>
    <recommendedName>
        <fullName evidence="1">Cytochrome b6-f complex subunit 5</fullName>
    </recommendedName>
    <alternativeName>
        <fullName evidence="1">Cytochrome b6-f complex subunit PetG</fullName>
    </alternativeName>
    <alternativeName>
        <fullName evidence="1">Cytochrome b6-f complex subunit V</fullName>
    </alternativeName>
</protein>
<gene>
    <name evidence="1" type="primary">petG</name>
</gene>
<keyword id="KW-0150">Chloroplast</keyword>
<keyword id="KW-0249">Electron transport</keyword>
<keyword id="KW-0472">Membrane</keyword>
<keyword id="KW-0602">Photosynthesis</keyword>
<keyword id="KW-0934">Plastid</keyword>
<keyword id="KW-1185">Reference proteome</keyword>
<keyword id="KW-0793">Thylakoid</keyword>
<keyword id="KW-0812">Transmembrane</keyword>
<keyword id="KW-1133">Transmembrane helix</keyword>
<keyword id="KW-0813">Transport</keyword>
<reference key="1">
    <citation type="journal article" date="2005" name="Plant Mol. Biol.">
        <title>Complete chloroplast genome sequence of Glycine max and comparative analyses with other legume genomes.</title>
        <authorList>
            <person name="Saski C."/>
            <person name="Lee S.-B."/>
            <person name="Daniell H."/>
            <person name="Wood T.C."/>
            <person name="Tomkins J."/>
            <person name="Kim H.-G."/>
            <person name="Jansen R.K."/>
        </authorList>
    </citation>
    <scope>NUCLEOTIDE SEQUENCE [LARGE SCALE GENOMIC DNA]</scope>
    <source>
        <strain>cv. PI 437654</strain>
    </source>
</reference>